<keyword id="KW-0378">Hydrolase</keyword>
<keyword id="KW-0460">Magnesium</keyword>
<keyword id="KW-0479">Metal-binding</keyword>
<keyword id="KW-0546">Nucleotide metabolism</keyword>
<keyword id="KW-0547">Nucleotide-binding</keyword>
<gene>
    <name type="ordered locus">MS1747</name>
</gene>
<organism>
    <name type="scientific">Mannheimia succiniciproducens (strain KCTC 0769BP / MBEL55E)</name>
    <dbReference type="NCBI Taxonomy" id="221988"/>
    <lineage>
        <taxon>Bacteria</taxon>
        <taxon>Pseudomonadati</taxon>
        <taxon>Pseudomonadota</taxon>
        <taxon>Gammaproteobacteria</taxon>
        <taxon>Pasteurellales</taxon>
        <taxon>Pasteurellaceae</taxon>
        <taxon>Basfia</taxon>
    </lineage>
</organism>
<evidence type="ECO:0000255" key="1">
    <source>
        <dbReference type="HAMAP-Rule" id="MF_01405"/>
    </source>
</evidence>
<comment type="function">
    <text evidence="1">Pyrophosphatase that catalyzes the hydrolysis of nucleoside triphosphates to their monophosphate derivatives, with a high preference for the non-canonical purine nucleotides XTP (xanthosine triphosphate), dITP (deoxyinosine triphosphate) and ITP. Seems to function as a house-cleaning enzyme that removes non-canonical purine nucleotides from the nucleotide pool, thus preventing their incorporation into DNA/RNA and avoiding chromosomal lesions.</text>
</comment>
<comment type="catalytic activity">
    <reaction evidence="1">
        <text>XTP + H2O = XMP + diphosphate + H(+)</text>
        <dbReference type="Rhea" id="RHEA:28610"/>
        <dbReference type="ChEBI" id="CHEBI:15377"/>
        <dbReference type="ChEBI" id="CHEBI:15378"/>
        <dbReference type="ChEBI" id="CHEBI:33019"/>
        <dbReference type="ChEBI" id="CHEBI:57464"/>
        <dbReference type="ChEBI" id="CHEBI:61314"/>
        <dbReference type="EC" id="3.6.1.66"/>
    </reaction>
</comment>
<comment type="catalytic activity">
    <reaction evidence="1">
        <text>dITP + H2O = dIMP + diphosphate + H(+)</text>
        <dbReference type="Rhea" id="RHEA:28342"/>
        <dbReference type="ChEBI" id="CHEBI:15377"/>
        <dbReference type="ChEBI" id="CHEBI:15378"/>
        <dbReference type="ChEBI" id="CHEBI:33019"/>
        <dbReference type="ChEBI" id="CHEBI:61194"/>
        <dbReference type="ChEBI" id="CHEBI:61382"/>
        <dbReference type="EC" id="3.6.1.66"/>
    </reaction>
</comment>
<comment type="catalytic activity">
    <reaction evidence="1">
        <text>ITP + H2O = IMP + diphosphate + H(+)</text>
        <dbReference type="Rhea" id="RHEA:29399"/>
        <dbReference type="ChEBI" id="CHEBI:15377"/>
        <dbReference type="ChEBI" id="CHEBI:15378"/>
        <dbReference type="ChEBI" id="CHEBI:33019"/>
        <dbReference type="ChEBI" id="CHEBI:58053"/>
        <dbReference type="ChEBI" id="CHEBI:61402"/>
        <dbReference type="EC" id="3.6.1.66"/>
    </reaction>
</comment>
<comment type="cofactor">
    <cofactor evidence="1">
        <name>Mg(2+)</name>
        <dbReference type="ChEBI" id="CHEBI:18420"/>
    </cofactor>
    <text evidence="1">Binds 1 Mg(2+) ion per subunit.</text>
</comment>
<comment type="subunit">
    <text evidence="1">Homodimer.</text>
</comment>
<comment type="similarity">
    <text evidence="1">Belongs to the HAM1 NTPase family.</text>
</comment>
<protein>
    <recommendedName>
        <fullName evidence="1">dITP/XTP pyrophosphatase</fullName>
        <ecNumber evidence="1">3.6.1.66</ecNumber>
    </recommendedName>
    <alternativeName>
        <fullName evidence="1">Non-canonical purine NTP pyrophosphatase</fullName>
    </alternativeName>
    <alternativeName>
        <fullName evidence="1">Non-standard purine NTP pyrophosphatase</fullName>
    </alternativeName>
    <alternativeName>
        <fullName evidence="1">Nucleoside-triphosphate diphosphatase</fullName>
    </alternativeName>
    <alternativeName>
        <fullName evidence="1">Nucleoside-triphosphate pyrophosphatase</fullName>
        <shortName evidence="1">NTPase</shortName>
    </alternativeName>
</protein>
<proteinExistence type="inferred from homology"/>
<dbReference type="EC" id="3.6.1.66" evidence="1"/>
<dbReference type="EMBL" id="AE016827">
    <property type="protein sequence ID" value="AAU38354.1"/>
    <property type="molecule type" value="Genomic_DNA"/>
</dbReference>
<dbReference type="RefSeq" id="WP_011200913.1">
    <property type="nucleotide sequence ID" value="NC_006300.1"/>
</dbReference>
<dbReference type="SMR" id="Q65RQ6"/>
<dbReference type="STRING" id="221988.MS1747"/>
<dbReference type="KEGG" id="msu:MS1747"/>
<dbReference type="eggNOG" id="COG0127">
    <property type="taxonomic scope" value="Bacteria"/>
</dbReference>
<dbReference type="HOGENOM" id="CLU_082080_0_3_6"/>
<dbReference type="OrthoDB" id="9807456at2"/>
<dbReference type="Proteomes" id="UP000000607">
    <property type="component" value="Chromosome"/>
</dbReference>
<dbReference type="GO" id="GO:0005829">
    <property type="term" value="C:cytosol"/>
    <property type="evidence" value="ECO:0007669"/>
    <property type="project" value="TreeGrafter"/>
</dbReference>
<dbReference type="GO" id="GO:0035870">
    <property type="term" value="F:dITP diphosphatase activity"/>
    <property type="evidence" value="ECO:0007669"/>
    <property type="project" value="RHEA"/>
</dbReference>
<dbReference type="GO" id="GO:0036220">
    <property type="term" value="F:ITP diphosphatase activity"/>
    <property type="evidence" value="ECO:0007669"/>
    <property type="project" value="UniProtKB-EC"/>
</dbReference>
<dbReference type="GO" id="GO:0046872">
    <property type="term" value="F:metal ion binding"/>
    <property type="evidence" value="ECO:0007669"/>
    <property type="project" value="UniProtKB-KW"/>
</dbReference>
<dbReference type="GO" id="GO:0000166">
    <property type="term" value="F:nucleotide binding"/>
    <property type="evidence" value="ECO:0007669"/>
    <property type="project" value="UniProtKB-KW"/>
</dbReference>
<dbReference type="GO" id="GO:0017111">
    <property type="term" value="F:ribonucleoside triphosphate phosphatase activity"/>
    <property type="evidence" value="ECO:0007669"/>
    <property type="project" value="InterPro"/>
</dbReference>
<dbReference type="GO" id="GO:0036222">
    <property type="term" value="F:XTP diphosphatase activity"/>
    <property type="evidence" value="ECO:0007669"/>
    <property type="project" value="RHEA"/>
</dbReference>
<dbReference type="GO" id="GO:0009117">
    <property type="term" value="P:nucleotide metabolic process"/>
    <property type="evidence" value="ECO:0007669"/>
    <property type="project" value="UniProtKB-KW"/>
</dbReference>
<dbReference type="GO" id="GO:0009146">
    <property type="term" value="P:purine nucleoside triphosphate catabolic process"/>
    <property type="evidence" value="ECO:0007669"/>
    <property type="project" value="UniProtKB-UniRule"/>
</dbReference>
<dbReference type="CDD" id="cd00515">
    <property type="entry name" value="HAM1"/>
    <property type="match status" value="1"/>
</dbReference>
<dbReference type="FunFam" id="3.90.950.10:FF:000001">
    <property type="entry name" value="dITP/XTP pyrophosphatase"/>
    <property type="match status" value="1"/>
</dbReference>
<dbReference type="Gene3D" id="3.90.950.10">
    <property type="match status" value="1"/>
</dbReference>
<dbReference type="HAMAP" id="MF_01405">
    <property type="entry name" value="Non_canon_purine_NTPase"/>
    <property type="match status" value="1"/>
</dbReference>
<dbReference type="InterPro" id="IPR020922">
    <property type="entry name" value="dITP/XTP_pyrophosphatase"/>
</dbReference>
<dbReference type="InterPro" id="IPR029001">
    <property type="entry name" value="ITPase-like_fam"/>
</dbReference>
<dbReference type="InterPro" id="IPR002637">
    <property type="entry name" value="RdgB/HAM1"/>
</dbReference>
<dbReference type="NCBIfam" id="TIGR00042">
    <property type="entry name" value="RdgB/HAM1 family non-canonical purine NTP pyrophosphatase"/>
    <property type="match status" value="1"/>
</dbReference>
<dbReference type="PANTHER" id="PTHR11067:SF9">
    <property type="entry name" value="INOSINE TRIPHOSPHATE PYROPHOSPHATASE"/>
    <property type="match status" value="1"/>
</dbReference>
<dbReference type="PANTHER" id="PTHR11067">
    <property type="entry name" value="INOSINE TRIPHOSPHATE PYROPHOSPHATASE/HAM1 PROTEIN"/>
    <property type="match status" value="1"/>
</dbReference>
<dbReference type="Pfam" id="PF01725">
    <property type="entry name" value="Ham1p_like"/>
    <property type="match status" value="1"/>
</dbReference>
<dbReference type="SUPFAM" id="SSF52972">
    <property type="entry name" value="ITPase-like"/>
    <property type="match status" value="1"/>
</dbReference>
<reference key="1">
    <citation type="journal article" date="2004" name="Nat. Biotechnol.">
        <title>The genome sequence of the capnophilic rumen bacterium Mannheimia succiniciproducens.</title>
        <authorList>
            <person name="Hong S.H."/>
            <person name="Kim J.S."/>
            <person name="Lee S.Y."/>
            <person name="In Y.H."/>
            <person name="Choi S.S."/>
            <person name="Rih J.-K."/>
            <person name="Kim C.H."/>
            <person name="Jeong H."/>
            <person name="Hur C.G."/>
            <person name="Kim J.J."/>
        </authorList>
    </citation>
    <scope>NUCLEOTIDE SEQUENCE [LARGE SCALE GENOMIC DNA]</scope>
    <source>
        <strain>KCTC 0769BP / MBEL55E</strain>
    </source>
</reference>
<feature type="chain" id="PRO_0000178190" description="dITP/XTP pyrophosphatase">
    <location>
        <begin position="1"/>
        <end position="199"/>
    </location>
</feature>
<feature type="active site" description="Proton acceptor" evidence="1">
    <location>
        <position position="70"/>
    </location>
</feature>
<feature type="binding site" evidence="1">
    <location>
        <begin position="9"/>
        <end position="14"/>
    </location>
    <ligand>
        <name>substrate</name>
    </ligand>
</feature>
<feature type="binding site" evidence="1">
    <location>
        <position position="41"/>
    </location>
    <ligand>
        <name>Mg(2+)</name>
        <dbReference type="ChEBI" id="CHEBI:18420"/>
    </ligand>
</feature>
<feature type="binding site" evidence="1">
    <location>
        <position position="70"/>
    </location>
    <ligand>
        <name>Mg(2+)</name>
        <dbReference type="ChEBI" id="CHEBI:18420"/>
    </ligand>
</feature>
<feature type="binding site" evidence="1">
    <location>
        <position position="71"/>
    </location>
    <ligand>
        <name>substrate</name>
    </ligand>
</feature>
<feature type="binding site" evidence="1">
    <location>
        <begin position="157"/>
        <end position="160"/>
    </location>
    <ligand>
        <name>substrate</name>
    </ligand>
</feature>
<feature type="binding site" evidence="1">
    <location>
        <position position="180"/>
    </location>
    <ligand>
        <name>substrate</name>
    </ligand>
</feature>
<feature type="binding site" evidence="1">
    <location>
        <begin position="185"/>
        <end position="186"/>
    </location>
    <ligand>
        <name>substrate</name>
    </ligand>
</feature>
<accession>Q65RQ6</accession>
<name>IXTPA_MANSM</name>
<sequence>MKQKIVLATGNKGKVREMSDVLADFGFEVVAQTDLDIESPEETGLTFVENALLKARYAAKVSGLPAIADDSGLVVEALNGAPGLYSARYAGIDGETADAENRRKLLRDLADVPVGKRQAKFVSCIVMLRHETDPSPIIAEGECIGEIIFAEKGENGFGYDSLFFTPEKGCTFAELETVEKKKISHRARALAVLKSKLGA</sequence>